<evidence type="ECO:0000255" key="1">
    <source>
        <dbReference type="HAMAP-Rule" id="MF_01043"/>
    </source>
</evidence>
<dbReference type="EC" id="2.3.1.275" evidence="1"/>
<dbReference type="EMBL" id="CP000248">
    <property type="protein sequence ID" value="ABD26240.1"/>
    <property type="molecule type" value="Genomic_DNA"/>
</dbReference>
<dbReference type="RefSeq" id="WP_011445450.1">
    <property type="nucleotide sequence ID" value="NC_007794.1"/>
</dbReference>
<dbReference type="SMR" id="Q2G7D3"/>
<dbReference type="STRING" id="279238.Saro_1800"/>
<dbReference type="KEGG" id="nar:Saro_1800"/>
<dbReference type="eggNOG" id="COG0344">
    <property type="taxonomic scope" value="Bacteria"/>
</dbReference>
<dbReference type="HOGENOM" id="CLU_081254_1_0_5"/>
<dbReference type="UniPathway" id="UPA00085"/>
<dbReference type="Proteomes" id="UP000009134">
    <property type="component" value="Chromosome"/>
</dbReference>
<dbReference type="GO" id="GO:0005886">
    <property type="term" value="C:plasma membrane"/>
    <property type="evidence" value="ECO:0007669"/>
    <property type="project" value="UniProtKB-SubCell"/>
</dbReference>
<dbReference type="GO" id="GO:0043772">
    <property type="term" value="F:acyl-phosphate glycerol-3-phosphate acyltransferase activity"/>
    <property type="evidence" value="ECO:0007669"/>
    <property type="project" value="UniProtKB-UniRule"/>
</dbReference>
<dbReference type="GO" id="GO:0008654">
    <property type="term" value="P:phospholipid biosynthetic process"/>
    <property type="evidence" value="ECO:0007669"/>
    <property type="project" value="UniProtKB-UniRule"/>
</dbReference>
<dbReference type="HAMAP" id="MF_01043">
    <property type="entry name" value="PlsY"/>
    <property type="match status" value="1"/>
</dbReference>
<dbReference type="InterPro" id="IPR003811">
    <property type="entry name" value="G3P_acylTferase_PlsY"/>
</dbReference>
<dbReference type="NCBIfam" id="TIGR00023">
    <property type="entry name" value="glycerol-3-phosphate 1-O-acyltransferase PlsY"/>
    <property type="match status" value="1"/>
</dbReference>
<dbReference type="PANTHER" id="PTHR30309:SF0">
    <property type="entry name" value="GLYCEROL-3-PHOSPHATE ACYLTRANSFERASE-RELATED"/>
    <property type="match status" value="1"/>
</dbReference>
<dbReference type="PANTHER" id="PTHR30309">
    <property type="entry name" value="INNER MEMBRANE PROTEIN YGIH"/>
    <property type="match status" value="1"/>
</dbReference>
<dbReference type="Pfam" id="PF02660">
    <property type="entry name" value="G3P_acyltransf"/>
    <property type="match status" value="1"/>
</dbReference>
<dbReference type="SMART" id="SM01207">
    <property type="entry name" value="G3P_acyltransf"/>
    <property type="match status" value="1"/>
</dbReference>
<accession>Q2G7D3</accession>
<proteinExistence type="inferred from homology"/>
<comment type="function">
    <text evidence="1">Catalyzes the transfer of an acyl group from acyl-phosphate (acyl-PO(4)) to glycerol-3-phosphate (G3P) to form lysophosphatidic acid (LPA). This enzyme utilizes acyl-phosphate as fatty acyl donor, but not acyl-CoA or acyl-ACP.</text>
</comment>
<comment type="catalytic activity">
    <reaction evidence="1">
        <text>an acyl phosphate + sn-glycerol 3-phosphate = a 1-acyl-sn-glycero-3-phosphate + phosphate</text>
        <dbReference type="Rhea" id="RHEA:34075"/>
        <dbReference type="ChEBI" id="CHEBI:43474"/>
        <dbReference type="ChEBI" id="CHEBI:57597"/>
        <dbReference type="ChEBI" id="CHEBI:57970"/>
        <dbReference type="ChEBI" id="CHEBI:59918"/>
        <dbReference type="EC" id="2.3.1.275"/>
    </reaction>
</comment>
<comment type="pathway">
    <text evidence="1">Lipid metabolism; phospholipid metabolism.</text>
</comment>
<comment type="subunit">
    <text evidence="1">Probably interacts with PlsX.</text>
</comment>
<comment type="subcellular location">
    <subcellularLocation>
        <location evidence="1">Cell inner membrane</location>
        <topology evidence="1">Multi-pass membrane protein</topology>
    </subcellularLocation>
</comment>
<comment type="similarity">
    <text evidence="1">Belongs to the PlsY family.</text>
</comment>
<organism>
    <name type="scientific">Novosphingobium aromaticivorans (strain ATCC 700278 / DSM 12444 / CCUG 56034 / CIP 105152 / NBRC 16084 / F199)</name>
    <dbReference type="NCBI Taxonomy" id="279238"/>
    <lineage>
        <taxon>Bacteria</taxon>
        <taxon>Pseudomonadati</taxon>
        <taxon>Pseudomonadota</taxon>
        <taxon>Alphaproteobacteria</taxon>
        <taxon>Sphingomonadales</taxon>
        <taxon>Sphingomonadaceae</taxon>
        <taxon>Novosphingobium</taxon>
    </lineage>
</organism>
<name>PLSY_NOVAD</name>
<protein>
    <recommendedName>
        <fullName evidence="1">Glycerol-3-phosphate acyltransferase</fullName>
    </recommendedName>
    <alternativeName>
        <fullName evidence="1">Acyl-PO4 G3P acyltransferase</fullName>
    </alternativeName>
    <alternativeName>
        <fullName evidence="1">Acyl-phosphate--glycerol-3-phosphate acyltransferase</fullName>
    </alternativeName>
    <alternativeName>
        <fullName evidence="1">G3P acyltransferase</fullName>
        <shortName evidence="1">GPAT</shortName>
        <ecNumber evidence="1">2.3.1.275</ecNumber>
    </alternativeName>
    <alternativeName>
        <fullName evidence="1">Lysophosphatidic acid synthase</fullName>
        <shortName evidence="1">LPA synthase</shortName>
    </alternativeName>
</protein>
<keyword id="KW-0997">Cell inner membrane</keyword>
<keyword id="KW-1003">Cell membrane</keyword>
<keyword id="KW-0444">Lipid biosynthesis</keyword>
<keyword id="KW-0443">Lipid metabolism</keyword>
<keyword id="KW-0472">Membrane</keyword>
<keyword id="KW-0594">Phospholipid biosynthesis</keyword>
<keyword id="KW-1208">Phospholipid metabolism</keyword>
<keyword id="KW-1185">Reference proteome</keyword>
<keyword id="KW-0808">Transferase</keyword>
<keyword id="KW-0812">Transmembrane</keyword>
<keyword id="KW-1133">Transmembrane helix</keyword>
<gene>
    <name evidence="1" type="primary">plsY</name>
    <name type="ordered locus">Saro_1800</name>
</gene>
<reference key="1">
    <citation type="submission" date="2006-01" db="EMBL/GenBank/DDBJ databases">
        <title>Complete sequence of Novosphingobium aromaticivorans DSM 12444.</title>
        <authorList>
            <consortium name="US DOE Joint Genome Institute"/>
            <person name="Copeland A."/>
            <person name="Lucas S."/>
            <person name="Lapidus A."/>
            <person name="Barry K."/>
            <person name="Detter J.C."/>
            <person name="Glavina T."/>
            <person name="Hammon N."/>
            <person name="Israni S."/>
            <person name="Pitluck S."/>
            <person name="Chain P."/>
            <person name="Malfatti S."/>
            <person name="Shin M."/>
            <person name="Vergez L."/>
            <person name="Schmutz J."/>
            <person name="Larimer F."/>
            <person name="Land M."/>
            <person name="Kyrpides N."/>
            <person name="Ivanova N."/>
            <person name="Fredrickson J."/>
            <person name="Balkwill D."/>
            <person name="Romine M.F."/>
            <person name="Richardson P."/>
        </authorList>
    </citation>
    <scope>NUCLEOTIDE SEQUENCE [LARGE SCALE GENOMIC DNA]</scope>
    <source>
        <strain>ATCC 700278 / DSM 12444 / CCUG 56034 / CIP 105152 / NBRC 16084 / F199</strain>
    </source>
</reference>
<sequence>MECGVETLLPLVVGYVLGSVPFGLILTRLTGAGDLRAIGSGNIGATNVLRTGKKGLAAATLLLDLGKGLAAVLIVRHVWPGAEALAALAAVLGHCFPVWLRFKGGKGVATLMGVSLALAWPIGLVYAVTWLGVLFLSRISSLGGMSAAVVAPVAAAVLGYAPYVPVLALLALLVLYLHRENIARLRAGTEPKVGSRK</sequence>
<feature type="chain" id="PRO_0000250316" description="Glycerol-3-phosphate acyltransferase">
    <location>
        <begin position="1"/>
        <end position="197"/>
    </location>
</feature>
<feature type="transmembrane region" description="Helical" evidence="1">
    <location>
        <begin position="7"/>
        <end position="27"/>
    </location>
</feature>
<feature type="transmembrane region" description="Helical" evidence="1">
    <location>
        <begin position="55"/>
        <end position="75"/>
    </location>
</feature>
<feature type="transmembrane region" description="Helical" evidence="1">
    <location>
        <begin position="78"/>
        <end position="98"/>
    </location>
</feature>
<feature type="transmembrane region" description="Helical" evidence="1">
    <location>
        <begin position="116"/>
        <end position="136"/>
    </location>
</feature>
<feature type="transmembrane region" description="Helical" evidence="1">
    <location>
        <begin position="157"/>
        <end position="177"/>
    </location>
</feature>